<name>YIDC_RICTY</name>
<keyword id="KW-0997">Cell inner membrane</keyword>
<keyword id="KW-1003">Cell membrane</keyword>
<keyword id="KW-0143">Chaperone</keyword>
<keyword id="KW-0472">Membrane</keyword>
<keyword id="KW-0653">Protein transport</keyword>
<keyword id="KW-0812">Transmembrane</keyword>
<keyword id="KW-1133">Transmembrane helix</keyword>
<keyword id="KW-0813">Transport</keyword>
<accession>Q68XS4</accession>
<feature type="chain" id="PRO_0000272372" description="Membrane protein insertase YidC">
    <location>
        <begin position="1"/>
        <end position="558"/>
    </location>
</feature>
<feature type="transmembrane region" description="Helical" evidence="1">
    <location>
        <begin position="5"/>
        <end position="25"/>
    </location>
</feature>
<feature type="transmembrane region" description="Helical" evidence="1">
    <location>
        <begin position="332"/>
        <end position="352"/>
    </location>
</feature>
<feature type="transmembrane region" description="Helical" evidence="1">
    <location>
        <begin position="355"/>
        <end position="375"/>
    </location>
</feature>
<feature type="transmembrane region" description="Helical" evidence="1">
    <location>
        <begin position="429"/>
        <end position="449"/>
    </location>
</feature>
<feature type="transmembrane region" description="Helical" evidence="1">
    <location>
        <begin position="474"/>
        <end position="494"/>
    </location>
</feature>
<feature type="transmembrane region" description="Helical" evidence="1">
    <location>
        <begin position="520"/>
        <end position="540"/>
    </location>
</feature>
<protein>
    <recommendedName>
        <fullName evidence="1">Membrane protein insertase YidC</fullName>
    </recommendedName>
    <alternativeName>
        <fullName evidence="1">Foldase YidC</fullName>
    </alternativeName>
    <alternativeName>
        <fullName evidence="1">Membrane integrase YidC</fullName>
    </alternativeName>
    <alternativeName>
        <fullName evidence="1">Membrane protein YidC</fullName>
    </alternativeName>
</protein>
<sequence length="558" mass="63987">MNNNIINLIAAIVLSLSIIFGWQYFVIKPEQKKQQQRMAIYKSENLKKQKALAEHTSNITVQEAGQVQRIKIESESLTGSIALKGLRFDDLILKKYKQDLSQNSPAVRLFSPANTENAYFAEIGLVSNLSSVKLPNSNTVWNSDSEVLSPEKPVNLFWVNEDGIKFLVTITVDKNYLFTIEQTIINNSDKELPVQAYGLINRKYIAVEKAVNILHQGPIGCIDENLKEYSYDDIKDQKSAKFALSKVDWIGIADKYWLSSLIPDKSSSYSANFNYALKQGAERYQVDFISPVQVIKPGKNLSIKSRIFAGAKKVDLLDEYEKSYDIKLFDRAIDFGWFYIITKPVFYAMNFFYGYVGNFGVSILIVTVIIKLLMFTLANKSYRSMKKMKNLQPEIDRIKNLYNNDKARLNQEIMALYKKSKVNPVAGCLPILVQIPVFFSIYKVLYVTIEMRHAPFYGWIKDLSSPDPTTIFNLFGLLPFAPPSFLMIGAWPILMAITMFLHQKMSPELADPIQAQVMKFMPLIFLFMFSSFPVGLLIYWSWNNILSIIQQYYINKFN</sequence>
<gene>
    <name evidence="1" type="primary">yidC</name>
    <name type="ordered locus">RT0082</name>
</gene>
<organism>
    <name type="scientific">Rickettsia typhi (strain ATCC VR-144 / Wilmington)</name>
    <dbReference type="NCBI Taxonomy" id="257363"/>
    <lineage>
        <taxon>Bacteria</taxon>
        <taxon>Pseudomonadati</taxon>
        <taxon>Pseudomonadota</taxon>
        <taxon>Alphaproteobacteria</taxon>
        <taxon>Rickettsiales</taxon>
        <taxon>Rickettsiaceae</taxon>
        <taxon>Rickettsieae</taxon>
        <taxon>Rickettsia</taxon>
        <taxon>typhus group</taxon>
    </lineage>
</organism>
<comment type="function">
    <text evidence="1">Required for the insertion and/or proper folding and/or complex formation of integral membrane proteins into the membrane. Involved in integration of membrane proteins that insert both dependently and independently of the Sec translocase complex, as well as at least some lipoproteins. Aids folding of multispanning membrane proteins.</text>
</comment>
<comment type="subunit">
    <text evidence="1">Interacts with the Sec translocase complex via SecD. Specifically interacts with transmembrane segments of nascent integral membrane proteins during membrane integration.</text>
</comment>
<comment type="subcellular location">
    <subcellularLocation>
        <location evidence="1">Cell inner membrane</location>
        <topology evidence="1">Multi-pass membrane protein</topology>
    </subcellularLocation>
</comment>
<comment type="similarity">
    <text evidence="1">Belongs to the OXA1/ALB3/YidC family. Type 1 subfamily.</text>
</comment>
<evidence type="ECO:0000255" key="1">
    <source>
        <dbReference type="HAMAP-Rule" id="MF_01810"/>
    </source>
</evidence>
<reference key="1">
    <citation type="journal article" date="2004" name="J. Bacteriol.">
        <title>Complete genome sequence of Rickettsia typhi and comparison with sequences of other Rickettsiae.</title>
        <authorList>
            <person name="McLeod M.P."/>
            <person name="Qin X."/>
            <person name="Karpathy S.E."/>
            <person name="Gioia J."/>
            <person name="Highlander S.K."/>
            <person name="Fox G.E."/>
            <person name="McNeill T.Z."/>
            <person name="Jiang H."/>
            <person name="Muzny D."/>
            <person name="Jacob L.S."/>
            <person name="Hawes A.C."/>
            <person name="Sodergren E."/>
            <person name="Gill R."/>
            <person name="Hume J."/>
            <person name="Morgan M."/>
            <person name="Fan G."/>
            <person name="Amin A.G."/>
            <person name="Gibbs R.A."/>
            <person name="Hong C."/>
            <person name="Yu X.-J."/>
            <person name="Walker D.H."/>
            <person name="Weinstock G.M."/>
        </authorList>
    </citation>
    <scope>NUCLEOTIDE SEQUENCE [LARGE SCALE GENOMIC DNA]</scope>
    <source>
        <strain>ATCC VR-144 / Wilmington</strain>
    </source>
</reference>
<dbReference type="EMBL" id="AE017197">
    <property type="protein sequence ID" value="AAU03568.1"/>
    <property type="molecule type" value="Genomic_DNA"/>
</dbReference>
<dbReference type="RefSeq" id="WP_011190555.1">
    <property type="nucleotide sequence ID" value="NC_006142.1"/>
</dbReference>
<dbReference type="SMR" id="Q68XS4"/>
<dbReference type="KEGG" id="rty:RT0082"/>
<dbReference type="eggNOG" id="COG0706">
    <property type="taxonomic scope" value="Bacteria"/>
</dbReference>
<dbReference type="HOGENOM" id="CLU_016535_1_0_5"/>
<dbReference type="OrthoDB" id="9780552at2"/>
<dbReference type="Proteomes" id="UP000000604">
    <property type="component" value="Chromosome"/>
</dbReference>
<dbReference type="GO" id="GO:0005886">
    <property type="term" value="C:plasma membrane"/>
    <property type="evidence" value="ECO:0007669"/>
    <property type="project" value="UniProtKB-SubCell"/>
</dbReference>
<dbReference type="GO" id="GO:0032977">
    <property type="term" value="F:membrane insertase activity"/>
    <property type="evidence" value="ECO:0007669"/>
    <property type="project" value="InterPro"/>
</dbReference>
<dbReference type="GO" id="GO:0051205">
    <property type="term" value="P:protein insertion into membrane"/>
    <property type="evidence" value="ECO:0007669"/>
    <property type="project" value="TreeGrafter"/>
</dbReference>
<dbReference type="GO" id="GO:0015031">
    <property type="term" value="P:protein transport"/>
    <property type="evidence" value="ECO:0007669"/>
    <property type="project" value="UniProtKB-KW"/>
</dbReference>
<dbReference type="CDD" id="cd20070">
    <property type="entry name" value="5TM_YidC_Alb3"/>
    <property type="match status" value="1"/>
</dbReference>
<dbReference type="CDD" id="cd19961">
    <property type="entry name" value="EcYidC-like_peri"/>
    <property type="match status" value="1"/>
</dbReference>
<dbReference type="Gene3D" id="2.70.98.90">
    <property type="match status" value="1"/>
</dbReference>
<dbReference type="HAMAP" id="MF_01810">
    <property type="entry name" value="YidC_type1"/>
    <property type="match status" value="1"/>
</dbReference>
<dbReference type="InterPro" id="IPR019998">
    <property type="entry name" value="Membr_insert_YidC"/>
</dbReference>
<dbReference type="InterPro" id="IPR028053">
    <property type="entry name" value="Membr_insert_YidC_N"/>
</dbReference>
<dbReference type="InterPro" id="IPR001708">
    <property type="entry name" value="YidC/ALB3/OXA1/COX18"/>
</dbReference>
<dbReference type="InterPro" id="IPR028055">
    <property type="entry name" value="YidC/Oxa/ALB_C"/>
</dbReference>
<dbReference type="InterPro" id="IPR047196">
    <property type="entry name" value="YidC_ALB_C"/>
</dbReference>
<dbReference type="InterPro" id="IPR038221">
    <property type="entry name" value="YidC_periplasmic_sf"/>
</dbReference>
<dbReference type="NCBIfam" id="NF002353">
    <property type="entry name" value="PRK01318.1-4"/>
    <property type="match status" value="1"/>
</dbReference>
<dbReference type="NCBIfam" id="TIGR03593">
    <property type="entry name" value="yidC_nterm"/>
    <property type="match status" value="1"/>
</dbReference>
<dbReference type="NCBIfam" id="TIGR03592">
    <property type="entry name" value="yidC_oxa1_cterm"/>
    <property type="match status" value="1"/>
</dbReference>
<dbReference type="PANTHER" id="PTHR12428:SF65">
    <property type="entry name" value="CYTOCHROME C OXIDASE ASSEMBLY PROTEIN COX18, MITOCHONDRIAL"/>
    <property type="match status" value="1"/>
</dbReference>
<dbReference type="PANTHER" id="PTHR12428">
    <property type="entry name" value="OXA1"/>
    <property type="match status" value="1"/>
</dbReference>
<dbReference type="Pfam" id="PF02096">
    <property type="entry name" value="60KD_IMP"/>
    <property type="match status" value="1"/>
</dbReference>
<dbReference type="Pfam" id="PF14849">
    <property type="entry name" value="YidC_periplas"/>
    <property type="match status" value="1"/>
</dbReference>
<dbReference type="PRINTS" id="PR00701">
    <property type="entry name" value="60KDINNERMP"/>
</dbReference>
<dbReference type="PRINTS" id="PR01900">
    <property type="entry name" value="YIDCPROTEIN"/>
</dbReference>
<proteinExistence type="inferred from homology"/>